<feature type="chain" id="PRO_1000046414" description="Phosphopentomutase">
    <location>
        <begin position="1"/>
        <end position="407"/>
    </location>
</feature>
<feature type="binding site" evidence="1">
    <location>
        <position position="10"/>
    </location>
    <ligand>
        <name>Mn(2+)</name>
        <dbReference type="ChEBI" id="CHEBI:29035"/>
        <label>1</label>
    </ligand>
</feature>
<feature type="binding site" evidence="1">
    <location>
        <position position="306"/>
    </location>
    <ligand>
        <name>Mn(2+)</name>
        <dbReference type="ChEBI" id="CHEBI:29035"/>
        <label>2</label>
    </ligand>
</feature>
<feature type="binding site" evidence="1">
    <location>
        <position position="311"/>
    </location>
    <ligand>
        <name>Mn(2+)</name>
        <dbReference type="ChEBI" id="CHEBI:29035"/>
        <label>2</label>
    </ligand>
</feature>
<feature type="binding site" evidence="1">
    <location>
        <position position="347"/>
    </location>
    <ligand>
        <name>Mn(2+)</name>
        <dbReference type="ChEBI" id="CHEBI:29035"/>
        <label>1</label>
    </ligand>
</feature>
<feature type="binding site" evidence="1">
    <location>
        <position position="348"/>
    </location>
    <ligand>
        <name>Mn(2+)</name>
        <dbReference type="ChEBI" id="CHEBI:29035"/>
        <label>1</label>
    </ligand>
</feature>
<feature type="binding site" evidence="1">
    <location>
        <position position="359"/>
    </location>
    <ligand>
        <name>Mn(2+)</name>
        <dbReference type="ChEBI" id="CHEBI:29035"/>
        <label>2</label>
    </ligand>
</feature>
<name>DEOB_YERE8</name>
<accession>A1JJ99</accession>
<organism>
    <name type="scientific">Yersinia enterocolitica serotype O:8 / biotype 1B (strain NCTC 13174 / 8081)</name>
    <dbReference type="NCBI Taxonomy" id="393305"/>
    <lineage>
        <taxon>Bacteria</taxon>
        <taxon>Pseudomonadati</taxon>
        <taxon>Pseudomonadota</taxon>
        <taxon>Gammaproteobacteria</taxon>
        <taxon>Enterobacterales</taxon>
        <taxon>Yersiniaceae</taxon>
        <taxon>Yersinia</taxon>
    </lineage>
</organism>
<sequence length="407" mass="44235">MKRTFIMVLDSFGIGASADANKFGDEGADTLGHIAEACARGEADIGRSGPLTLPNLSRLGLGKAAEESTGKFPVGLDKNADIIGAYGYASELSSGKDTPSGHWEIAGVPVLFDWGYFSDVENSFPQELLDKLVKRANLPGYLGNCHSSGTVILDQLGEEHMKTGKPIFYTSADSVFQIACHEETFGLDRLYELCEIAREELTEGGYNIGRVIARPFIGDKPGNFQRTGNRHDLAVEPPAPTMLKKLVDEKGGEVVSIGKIADIYAHVGITQKVKATGLDALFDATIEEMKKAGDNTIVFTNFVDFDSSYGHRRDVAGYAAALELFDRRLPELMALVKEDDILLLTADHGCDPTWPGTDHTREHIPVLVYGPKVKPGSLGHRETFADIGQTVAKYFDLSPMDYGKNML</sequence>
<evidence type="ECO:0000255" key="1">
    <source>
        <dbReference type="HAMAP-Rule" id="MF_00740"/>
    </source>
</evidence>
<gene>
    <name evidence="1" type="primary">deoB</name>
    <name type="ordered locus">YE0572</name>
</gene>
<reference key="1">
    <citation type="journal article" date="2006" name="PLoS Genet.">
        <title>The complete genome sequence and comparative genome analysis of the high pathogenicity Yersinia enterocolitica strain 8081.</title>
        <authorList>
            <person name="Thomson N.R."/>
            <person name="Howard S."/>
            <person name="Wren B.W."/>
            <person name="Holden M.T.G."/>
            <person name="Crossman L."/>
            <person name="Challis G.L."/>
            <person name="Churcher C."/>
            <person name="Mungall K."/>
            <person name="Brooks K."/>
            <person name="Chillingworth T."/>
            <person name="Feltwell T."/>
            <person name="Abdellah Z."/>
            <person name="Hauser H."/>
            <person name="Jagels K."/>
            <person name="Maddison M."/>
            <person name="Moule S."/>
            <person name="Sanders M."/>
            <person name="Whitehead S."/>
            <person name="Quail M.A."/>
            <person name="Dougan G."/>
            <person name="Parkhill J."/>
            <person name="Prentice M.B."/>
        </authorList>
    </citation>
    <scope>NUCLEOTIDE SEQUENCE [LARGE SCALE GENOMIC DNA]</scope>
    <source>
        <strain>NCTC 13174 / 8081</strain>
    </source>
</reference>
<protein>
    <recommendedName>
        <fullName evidence="1">Phosphopentomutase</fullName>
        <ecNumber evidence="1">5.4.2.7</ecNumber>
    </recommendedName>
    <alternativeName>
        <fullName evidence="1">Phosphodeoxyribomutase</fullName>
    </alternativeName>
</protein>
<keyword id="KW-0963">Cytoplasm</keyword>
<keyword id="KW-0413">Isomerase</keyword>
<keyword id="KW-0464">Manganese</keyword>
<keyword id="KW-0479">Metal-binding</keyword>
<dbReference type="EC" id="5.4.2.7" evidence="1"/>
<dbReference type="EMBL" id="AM286415">
    <property type="protein sequence ID" value="CAL10689.1"/>
    <property type="molecule type" value="Genomic_DNA"/>
</dbReference>
<dbReference type="RefSeq" id="WP_011815520.1">
    <property type="nucleotide sequence ID" value="NC_008800.1"/>
</dbReference>
<dbReference type="RefSeq" id="YP_001004930.1">
    <property type="nucleotide sequence ID" value="NC_008800.1"/>
</dbReference>
<dbReference type="SMR" id="A1JJ99"/>
<dbReference type="KEGG" id="yen:YE0572"/>
<dbReference type="PATRIC" id="fig|393305.7.peg.665"/>
<dbReference type="eggNOG" id="COG1015">
    <property type="taxonomic scope" value="Bacteria"/>
</dbReference>
<dbReference type="HOGENOM" id="CLU_053861_0_0_6"/>
<dbReference type="OrthoDB" id="9769930at2"/>
<dbReference type="UniPathway" id="UPA00002">
    <property type="reaction ID" value="UER00467"/>
</dbReference>
<dbReference type="Proteomes" id="UP000000642">
    <property type="component" value="Chromosome"/>
</dbReference>
<dbReference type="GO" id="GO:0005829">
    <property type="term" value="C:cytosol"/>
    <property type="evidence" value="ECO:0007669"/>
    <property type="project" value="TreeGrafter"/>
</dbReference>
<dbReference type="GO" id="GO:0000287">
    <property type="term" value="F:magnesium ion binding"/>
    <property type="evidence" value="ECO:0007669"/>
    <property type="project" value="InterPro"/>
</dbReference>
<dbReference type="GO" id="GO:0030145">
    <property type="term" value="F:manganese ion binding"/>
    <property type="evidence" value="ECO:0007669"/>
    <property type="project" value="UniProtKB-UniRule"/>
</dbReference>
<dbReference type="GO" id="GO:0008973">
    <property type="term" value="F:phosphopentomutase activity"/>
    <property type="evidence" value="ECO:0007669"/>
    <property type="project" value="UniProtKB-UniRule"/>
</dbReference>
<dbReference type="GO" id="GO:0006018">
    <property type="term" value="P:2-deoxyribose 1-phosphate catabolic process"/>
    <property type="evidence" value="ECO:0007669"/>
    <property type="project" value="UniProtKB-UniRule"/>
</dbReference>
<dbReference type="GO" id="GO:0006015">
    <property type="term" value="P:5-phosphoribose 1-diphosphate biosynthetic process"/>
    <property type="evidence" value="ECO:0007669"/>
    <property type="project" value="UniProtKB-UniPathway"/>
</dbReference>
<dbReference type="GO" id="GO:0043094">
    <property type="term" value="P:metabolic compound salvage"/>
    <property type="evidence" value="ECO:0007669"/>
    <property type="project" value="InterPro"/>
</dbReference>
<dbReference type="GO" id="GO:0009117">
    <property type="term" value="P:nucleotide metabolic process"/>
    <property type="evidence" value="ECO:0007669"/>
    <property type="project" value="InterPro"/>
</dbReference>
<dbReference type="CDD" id="cd16009">
    <property type="entry name" value="PPM"/>
    <property type="match status" value="1"/>
</dbReference>
<dbReference type="FunFam" id="3.30.70.1250:FF:000001">
    <property type="entry name" value="Phosphopentomutase"/>
    <property type="match status" value="1"/>
</dbReference>
<dbReference type="Gene3D" id="3.40.720.10">
    <property type="entry name" value="Alkaline Phosphatase, subunit A"/>
    <property type="match status" value="1"/>
</dbReference>
<dbReference type="Gene3D" id="3.30.70.1250">
    <property type="entry name" value="Phosphopentomutase"/>
    <property type="match status" value="1"/>
</dbReference>
<dbReference type="HAMAP" id="MF_00740">
    <property type="entry name" value="Phosphopentomut"/>
    <property type="match status" value="1"/>
</dbReference>
<dbReference type="InterPro" id="IPR017850">
    <property type="entry name" value="Alkaline_phosphatase_core_sf"/>
</dbReference>
<dbReference type="InterPro" id="IPR010045">
    <property type="entry name" value="DeoB"/>
</dbReference>
<dbReference type="InterPro" id="IPR006124">
    <property type="entry name" value="Metalloenzyme"/>
</dbReference>
<dbReference type="InterPro" id="IPR024052">
    <property type="entry name" value="Phosphopentomutase_DeoB_cap_sf"/>
</dbReference>
<dbReference type="NCBIfam" id="TIGR01696">
    <property type="entry name" value="deoB"/>
    <property type="match status" value="1"/>
</dbReference>
<dbReference type="NCBIfam" id="NF003766">
    <property type="entry name" value="PRK05362.1"/>
    <property type="match status" value="1"/>
</dbReference>
<dbReference type="PANTHER" id="PTHR21110">
    <property type="entry name" value="PHOSPHOPENTOMUTASE"/>
    <property type="match status" value="1"/>
</dbReference>
<dbReference type="PANTHER" id="PTHR21110:SF0">
    <property type="entry name" value="PHOSPHOPENTOMUTASE"/>
    <property type="match status" value="1"/>
</dbReference>
<dbReference type="Pfam" id="PF01676">
    <property type="entry name" value="Metalloenzyme"/>
    <property type="match status" value="1"/>
</dbReference>
<dbReference type="PIRSF" id="PIRSF001491">
    <property type="entry name" value="Ppentomutase"/>
    <property type="match status" value="1"/>
</dbReference>
<dbReference type="SUPFAM" id="SSF53649">
    <property type="entry name" value="Alkaline phosphatase-like"/>
    <property type="match status" value="1"/>
</dbReference>
<dbReference type="SUPFAM" id="SSF143856">
    <property type="entry name" value="DeoB insert domain-like"/>
    <property type="match status" value="1"/>
</dbReference>
<proteinExistence type="inferred from homology"/>
<comment type="function">
    <text evidence="1">Isomerase that catalyzes the conversion of deoxy-ribose 1-phosphate (dRib-1-P) and ribose 1-phosphate (Rib-1-P) to deoxy-ribose 5-phosphate (dRib-5-P) and ribose 5-phosphate (Rib-5-P), respectively.</text>
</comment>
<comment type="catalytic activity">
    <reaction evidence="1">
        <text>2-deoxy-alpha-D-ribose 1-phosphate = 2-deoxy-D-ribose 5-phosphate</text>
        <dbReference type="Rhea" id="RHEA:27658"/>
        <dbReference type="ChEBI" id="CHEBI:57259"/>
        <dbReference type="ChEBI" id="CHEBI:62877"/>
        <dbReference type="EC" id="5.4.2.7"/>
    </reaction>
</comment>
<comment type="catalytic activity">
    <reaction evidence="1">
        <text>alpha-D-ribose 1-phosphate = D-ribose 5-phosphate</text>
        <dbReference type="Rhea" id="RHEA:18793"/>
        <dbReference type="ChEBI" id="CHEBI:57720"/>
        <dbReference type="ChEBI" id="CHEBI:78346"/>
        <dbReference type="EC" id="5.4.2.7"/>
    </reaction>
</comment>
<comment type="cofactor">
    <cofactor evidence="1">
        <name>Mn(2+)</name>
        <dbReference type="ChEBI" id="CHEBI:29035"/>
    </cofactor>
    <text evidence="1">Binds 2 manganese ions.</text>
</comment>
<comment type="pathway">
    <text evidence="1">Carbohydrate degradation; 2-deoxy-D-ribose 1-phosphate degradation; D-glyceraldehyde 3-phosphate and acetaldehyde from 2-deoxy-alpha-D-ribose 1-phosphate: step 1/2.</text>
</comment>
<comment type="subcellular location">
    <subcellularLocation>
        <location evidence="1">Cytoplasm</location>
    </subcellularLocation>
</comment>
<comment type="similarity">
    <text evidence="1">Belongs to the phosphopentomutase family.</text>
</comment>